<comment type="function">
    <text>Mediates adherence to oropharyngeal epithelial cells. Helps the airway colonization process.</text>
</comment>
<comment type="subcellular location">
    <subcellularLocation>
        <location>Fimbrium</location>
    </subcellularLocation>
</comment>
<comment type="similarity">
    <text evidence="2">Belongs to the fimbrial protein family.</text>
</comment>
<sequence length="216" mass="23266">MKKTLLGSLILLAFAGNVQAAANADTKGTVTFFGKVVENTCQVKTDHKNRSVVLNDVGKNSLKDKGNTAMPTPFTITLQNCNLTAANSSTNKANKVGLYFYSWENADKENNFTLKNKTSTSNDFATMVNIQLMESDGTKEIKVVGKETEDFVHKNATGAGVALTQTHPDNDHISGSTQLTGVTGDLPLHFIAQYYSLGSTTAGKVQSSVDFQIAYE</sequence>
<evidence type="ECO:0000250" key="1"/>
<evidence type="ECO:0000305" key="2"/>
<accession>Q03846</accession>
<name>HIFA1_HAEIF</name>
<proteinExistence type="inferred from homology"/>
<dbReference type="EMBL" id="M64334">
    <property type="protein sequence ID" value="AAA24965.1"/>
    <property type="molecule type" value="Genomic_DNA"/>
</dbReference>
<dbReference type="PIR" id="A39021">
    <property type="entry name" value="A39021"/>
</dbReference>
<dbReference type="PIR" id="A60331">
    <property type="entry name" value="A60331"/>
</dbReference>
<dbReference type="SMR" id="Q03846"/>
<dbReference type="GO" id="GO:0009289">
    <property type="term" value="C:pilus"/>
    <property type="evidence" value="ECO:0007669"/>
    <property type="project" value="UniProtKB-SubCell"/>
</dbReference>
<dbReference type="GO" id="GO:0043709">
    <property type="term" value="P:cell adhesion involved in single-species biofilm formation"/>
    <property type="evidence" value="ECO:0007669"/>
    <property type="project" value="TreeGrafter"/>
</dbReference>
<dbReference type="Gene3D" id="2.60.40.1090">
    <property type="entry name" value="Fimbrial-type adhesion domain"/>
    <property type="match status" value="1"/>
</dbReference>
<dbReference type="InterPro" id="IPR000259">
    <property type="entry name" value="Adhesion_dom_fimbrial"/>
</dbReference>
<dbReference type="InterPro" id="IPR036937">
    <property type="entry name" value="Adhesion_dom_fimbrial_sf"/>
</dbReference>
<dbReference type="InterPro" id="IPR008966">
    <property type="entry name" value="Adhesion_dom_sf"/>
</dbReference>
<dbReference type="InterPro" id="IPR050263">
    <property type="entry name" value="Bact_Fimbrial_Adh_Pro"/>
</dbReference>
<dbReference type="PANTHER" id="PTHR33420:SF3">
    <property type="entry name" value="FIMBRIAL SUBUNIT ELFA"/>
    <property type="match status" value="1"/>
</dbReference>
<dbReference type="PANTHER" id="PTHR33420">
    <property type="entry name" value="FIMBRIAL SUBUNIT ELFA-RELATED"/>
    <property type="match status" value="1"/>
</dbReference>
<dbReference type="Pfam" id="PF00419">
    <property type="entry name" value="Fimbrial"/>
    <property type="match status" value="1"/>
</dbReference>
<dbReference type="SUPFAM" id="SSF49401">
    <property type="entry name" value="Bacterial adhesins"/>
    <property type="match status" value="1"/>
</dbReference>
<organism>
    <name type="scientific">Haemophilus influenzae</name>
    <dbReference type="NCBI Taxonomy" id="727"/>
    <lineage>
        <taxon>Bacteria</taxon>
        <taxon>Pseudomonadati</taxon>
        <taxon>Pseudomonadota</taxon>
        <taxon>Gammaproteobacteria</taxon>
        <taxon>Pasteurellales</taxon>
        <taxon>Pasteurellaceae</taxon>
        <taxon>Haemophilus</taxon>
    </lineage>
</organism>
<reference key="1">
    <citation type="journal article" date="1991" name="Infect. Immun.">
        <title>Comparison and analysis of the nucleotide sequences of pilin genes from Haemophilus influenzae type b strains Eagan and M43.</title>
        <authorList>
            <person name="Forney L.J."/>
            <person name="Marrs C.F."/>
            <person name="Bektesh S."/>
            <person name="Gilsdorf J.R."/>
        </authorList>
    </citation>
    <scope>NUCLEOTIDE SEQUENCE [GENOMIC DNA]</scope>
    <source>
        <strain>Eagan / Serotype B</strain>
    </source>
</reference>
<gene>
    <name type="primary">hifA</name>
</gene>
<keyword id="KW-1015">Disulfide bond</keyword>
<keyword id="KW-0281">Fimbrium</keyword>
<keyword id="KW-0732">Signal</keyword>
<protein>
    <recommendedName>
        <fullName>Major fimbrial subunit</fullName>
    </recommendedName>
    <alternativeName>
        <fullName>Major pilin</fullName>
    </alternativeName>
</protein>
<feature type="signal peptide" evidence="1">
    <location>
        <begin position="1"/>
        <end position="20"/>
    </location>
</feature>
<feature type="chain" id="PRO_0000009216" description="Major fimbrial subunit">
    <location>
        <begin position="21"/>
        <end position="216"/>
    </location>
</feature>
<feature type="disulfide bond" evidence="2">
    <location>
        <begin position="41"/>
        <end position="81"/>
    </location>
</feature>